<gene>
    <name evidence="2" type="primary">tuf1</name>
    <name type="ordered locus">BMA2634</name>
</gene>
<gene>
    <name evidence="2" type="primary">tuf2</name>
    <name type="ordered locus">BMA2649</name>
</gene>
<proteinExistence type="inferred from homology"/>
<sequence length="396" mass="42991">MAKEKFERTKPHVNVGTIGHVDHGKTTLTAAIATVLSAKFGGEAKKYDEIDAAPEEKARGITINTAHIEYETANRHYAHVDCPGHADYVKNMITGAAQMDGAILVCSAADGPMPQTREHILLARQVGVPYIIVFLNKCDMVDDAELLELVEMEVRELLSKYDFPGDDTPIIKGSAKLALEGDKGELGEVAIMNLADALDTYIPTPERAVDGAFLMPVEDVFSISGRGTVVTGRVERGVIKVGEEIEIVGIKATAKTTCTGVEMFRKLLDQGQAGDNVGILLRGTKREDVERGQVLAKPGSITPHTHFTAEVYVLSKDEGGRHTPFFNNYRPQFYFRTTDVTGSIELPKDKEMVMPGDNVSITVKLIAPIAMEEGLRFAIREGGRTVGAGVVAKIIE</sequence>
<keyword id="KW-0963">Cytoplasm</keyword>
<keyword id="KW-0251">Elongation factor</keyword>
<keyword id="KW-0342">GTP-binding</keyword>
<keyword id="KW-0378">Hydrolase</keyword>
<keyword id="KW-0460">Magnesium</keyword>
<keyword id="KW-0479">Metal-binding</keyword>
<keyword id="KW-0547">Nucleotide-binding</keyword>
<keyword id="KW-0648">Protein biosynthesis</keyword>
<keyword id="KW-1185">Reference proteome</keyword>
<accession>Q62GK3</accession>
<organism>
    <name type="scientific">Burkholderia mallei (strain ATCC 23344)</name>
    <dbReference type="NCBI Taxonomy" id="243160"/>
    <lineage>
        <taxon>Bacteria</taxon>
        <taxon>Pseudomonadati</taxon>
        <taxon>Pseudomonadota</taxon>
        <taxon>Betaproteobacteria</taxon>
        <taxon>Burkholderiales</taxon>
        <taxon>Burkholderiaceae</taxon>
        <taxon>Burkholderia</taxon>
        <taxon>pseudomallei group</taxon>
    </lineage>
</organism>
<feature type="chain" id="PRO_0000337337" description="Elongation factor Tu">
    <location>
        <begin position="1"/>
        <end position="396"/>
    </location>
</feature>
<feature type="domain" description="tr-type G">
    <location>
        <begin position="10"/>
        <end position="206"/>
    </location>
</feature>
<feature type="region of interest" description="G1" evidence="1">
    <location>
        <begin position="19"/>
        <end position="26"/>
    </location>
</feature>
<feature type="region of interest" description="G2" evidence="1">
    <location>
        <begin position="60"/>
        <end position="64"/>
    </location>
</feature>
<feature type="region of interest" description="G3" evidence="1">
    <location>
        <begin position="81"/>
        <end position="84"/>
    </location>
</feature>
<feature type="region of interest" description="G4" evidence="1">
    <location>
        <begin position="136"/>
        <end position="139"/>
    </location>
</feature>
<feature type="region of interest" description="G5" evidence="1">
    <location>
        <begin position="174"/>
        <end position="176"/>
    </location>
</feature>
<feature type="binding site" evidence="2">
    <location>
        <begin position="19"/>
        <end position="26"/>
    </location>
    <ligand>
        <name>GTP</name>
        <dbReference type="ChEBI" id="CHEBI:37565"/>
    </ligand>
</feature>
<feature type="binding site" evidence="2">
    <location>
        <position position="26"/>
    </location>
    <ligand>
        <name>Mg(2+)</name>
        <dbReference type="ChEBI" id="CHEBI:18420"/>
    </ligand>
</feature>
<feature type="binding site" evidence="2">
    <location>
        <begin position="81"/>
        <end position="85"/>
    </location>
    <ligand>
        <name>GTP</name>
        <dbReference type="ChEBI" id="CHEBI:37565"/>
    </ligand>
</feature>
<feature type="binding site" evidence="2">
    <location>
        <begin position="136"/>
        <end position="139"/>
    </location>
    <ligand>
        <name>GTP</name>
        <dbReference type="ChEBI" id="CHEBI:37565"/>
    </ligand>
</feature>
<reference key="1">
    <citation type="journal article" date="2004" name="Proc. Natl. Acad. Sci. U.S.A.">
        <title>Structural flexibility in the Burkholderia mallei genome.</title>
        <authorList>
            <person name="Nierman W.C."/>
            <person name="DeShazer D."/>
            <person name="Kim H.S."/>
            <person name="Tettelin H."/>
            <person name="Nelson K.E."/>
            <person name="Feldblyum T.V."/>
            <person name="Ulrich R.L."/>
            <person name="Ronning C.M."/>
            <person name="Brinkac L.M."/>
            <person name="Daugherty S.C."/>
            <person name="Davidsen T.D."/>
            <person name="DeBoy R.T."/>
            <person name="Dimitrov G."/>
            <person name="Dodson R.J."/>
            <person name="Durkin A.S."/>
            <person name="Gwinn M.L."/>
            <person name="Haft D.H."/>
            <person name="Khouri H.M."/>
            <person name="Kolonay J.F."/>
            <person name="Madupu R."/>
            <person name="Mohammoud Y."/>
            <person name="Nelson W.C."/>
            <person name="Radune D."/>
            <person name="Romero C.M."/>
            <person name="Sarria S."/>
            <person name="Selengut J."/>
            <person name="Shamblin C."/>
            <person name="Sullivan S.A."/>
            <person name="White O."/>
            <person name="Yu Y."/>
            <person name="Zafar N."/>
            <person name="Zhou L."/>
            <person name="Fraser C.M."/>
        </authorList>
    </citation>
    <scope>NUCLEOTIDE SEQUENCE [LARGE SCALE GENOMIC DNA]</scope>
    <source>
        <strain>ATCC 23344</strain>
    </source>
</reference>
<evidence type="ECO:0000250" key="1"/>
<evidence type="ECO:0000255" key="2">
    <source>
        <dbReference type="HAMAP-Rule" id="MF_00118"/>
    </source>
</evidence>
<name>EFTU_BURMA</name>
<protein>
    <recommendedName>
        <fullName evidence="2">Elongation factor Tu</fullName>
        <shortName evidence="2">EF-Tu</shortName>
        <ecNumber evidence="2">3.6.5.3</ecNumber>
    </recommendedName>
</protein>
<dbReference type="EC" id="3.6.5.3" evidence="2"/>
<dbReference type="EMBL" id="CP000010">
    <property type="protein sequence ID" value="AAU47872.1"/>
    <property type="molecule type" value="Genomic_DNA"/>
</dbReference>
<dbReference type="EMBL" id="CP000010">
    <property type="protein sequence ID" value="AAU47885.1"/>
    <property type="molecule type" value="Genomic_DNA"/>
</dbReference>
<dbReference type="RefSeq" id="YP_104168.1">
    <property type="nucleotide sequence ID" value="NC_006348.1"/>
</dbReference>
<dbReference type="RefSeq" id="YP_104181.1">
    <property type="nucleotide sequence ID" value="NC_006348.1"/>
</dbReference>
<dbReference type="SMR" id="Q62GK3"/>
<dbReference type="KEGG" id="bma:BMA2634"/>
<dbReference type="KEGG" id="bma:BMA2649"/>
<dbReference type="PATRIC" id="fig|243160.12.peg.2705"/>
<dbReference type="eggNOG" id="COG0050">
    <property type="taxonomic scope" value="Bacteria"/>
</dbReference>
<dbReference type="HOGENOM" id="CLU_007265_0_0_4"/>
<dbReference type="Proteomes" id="UP000006693">
    <property type="component" value="Chromosome 1"/>
</dbReference>
<dbReference type="GO" id="GO:0005737">
    <property type="term" value="C:cytoplasm"/>
    <property type="evidence" value="ECO:0007669"/>
    <property type="project" value="UniProtKB-SubCell"/>
</dbReference>
<dbReference type="GO" id="GO:0005525">
    <property type="term" value="F:GTP binding"/>
    <property type="evidence" value="ECO:0007669"/>
    <property type="project" value="UniProtKB-UniRule"/>
</dbReference>
<dbReference type="GO" id="GO:0003924">
    <property type="term" value="F:GTPase activity"/>
    <property type="evidence" value="ECO:0007669"/>
    <property type="project" value="InterPro"/>
</dbReference>
<dbReference type="GO" id="GO:0097216">
    <property type="term" value="F:guanosine tetraphosphate binding"/>
    <property type="evidence" value="ECO:0007669"/>
    <property type="project" value="UniProtKB-ARBA"/>
</dbReference>
<dbReference type="GO" id="GO:0003746">
    <property type="term" value="F:translation elongation factor activity"/>
    <property type="evidence" value="ECO:0007669"/>
    <property type="project" value="UniProtKB-UniRule"/>
</dbReference>
<dbReference type="CDD" id="cd01884">
    <property type="entry name" value="EF_Tu"/>
    <property type="match status" value="1"/>
</dbReference>
<dbReference type="CDD" id="cd03697">
    <property type="entry name" value="EFTU_II"/>
    <property type="match status" value="1"/>
</dbReference>
<dbReference type="CDD" id="cd03707">
    <property type="entry name" value="EFTU_III"/>
    <property type="match status" value="1"/>
</dbReference>
<dbReference type="FunFam" id="2.40.30.10:FF:000001">
    <property type="entry name" value="Elongation factor Tu"/>
    <property type="match status" value="1"/>
</dbReference>
<dbReference type="FunFam" id="3.40.50.300:FF:000003">
    <property type="entry name" value="Elongation factor Tu"/>
    <property type="match status" value="1"/>
</dbReference>
<dbReference type="Gene3D" id="3.40.50.300">
    <property type="entry name" value="P-loop containing nucleotide triphosphate hydrolases"/>
    <property type="match status" value="1"/>
</dbReference>
<dbReference type="Gene3D" id="2.40.30.10">
    <property type="entry name" value="Translation factors"/>
    <property type="match status" value="2"/>
</dbReference>
<dbReference type="HAMAP" id="MF_00118_B">
    <property type="entry name" value="EF_Tu_B"/>
    <property type="match status" value="1"/>
</dbReference>
<dbReference type="InterPro" id="IPR041709">
    <property type="entry name" value="EF-Tu_GTP-bd"/>
</dbReference>
<dbReference type="InterPro" id="IPR050055">
    <property type="entry name" value="EF-Tu_GTPase"/>
</dbReference>
<dbReference type="InterPro" id="IPR004161">
    <property type="entry name" value="EFTu-like_2"/>
</dbReference>
<dbReference type="InterPro" id="IPR033720">
    <property type="entry name" value="EFTU_2"/>
</dbReference>
<dbReference type="InterPro" id="IPR031157">
    <property type="entry name" value="G_TR_CS"/>
</dbReference>
<dbReference type="InterPro" id="IPR027417">
    <property type="entry name" value="P-loop_NTPase"/>
</dbReference>
<dbReference type="InterPro" id="IPR005225">
    <property type="entry name" value="Small_GTP-bd"/>
</dbReference>
<dbReference type="InterPro" id="IPR000795">
    <property type="entry name" value="T_Tr_GTP-bd_dom"/>
</dbReference>
<dbReference type="InterPro" id="IPR009000">
    <property type="entry name" value="Transl_B-barrel_sf"/>
</dbReference>
<dbReference type="InterPro" id="IPR009001">
    <property type="entry name" value="Transl_elong_EF1A/Init_IF2_C"/>
</dbReference>
<dbReference type="InterPro" id="IPR004541">
    <property type="entry name" value="Transl_elong_EFTu/EF1A_bac/org"/>
</dbReference>
<dbReference type="InterPro" id="IPR004160">
    <property type="entry name" value="Transl_elong_EFTu/EF1A_C"/>
</dbReference>
<dbReference type="NCBIfam" id="TIGR00485">
    <property type="entry name" value="EF-Tu"/>
    <property type="match status" value="1"/>
</dbReference>
<dbReference type="NCBIfam" id="NF000766">
    <property type="entry name" value="PRK00049.1"/>
    <property type="match status" value="1"/>
</dbReference>
<dbReference type="NCBIfam" id="NF009372">
    <property type="entry name" value="PRK12735.1"/>
    <property type="match status" value="1"/>
</dbReference>
<dbReference type="NCBIfam" id="NF009373">
    <property type="entry name" value="PRK12736.1"/>
    <property type="match status" value="1"/>
</dbReference>
<dbReference type="NCBIfam" id="TIGR00231">
    <property type="entry name" value="small_GTP"/>
    <property type="match status" value="1"/>
</dbReference>
<dbReference type="PANTHER" id="PTHR43721:SF22">
    <property type="entry name" value="ELONGATION FACTOR TU, MITOCHONDRIAL"/>
    <property type="match status" value="1"/>
</dbReference>
<dbReference type="PANTHER" id="PTHR43721">
    <property type="entry name" value="ELONGATION FACTOR TU-RELATED"/>
    <property type="match status" value="1"/>
</dbReference>
<dbReference type="Pfam" id="PF00009">
    <property type="entry name" value="GTP_EFTU"/>
    <property type="match status" value="1"/>
</dbReference>
<dbReference type="Pfam" id="PF03144">
    <property type="entry name" value="GTP_EFTU_D2"/>
    <property type="match status" value="1"/>
</dbReference>
<dbReference type="Pfam" id="PF03143">
    <property type="entry name" value="GTP_EFTU_D3"/>
    <property type="match status" value="1"/>
</dbReference>
<dbReference type="PRINTS" id="PR00315">
    <property type="entry name" value="ELONGATNFCT"/>
</dbReference>
<dbReference type="SUPFAM" id="SSF50465">
    <property type="entry name" value="EF-Tu/eEF-1alpha/eIF2-gamma C-terminal domain"/>
    <property type="match status" value="1"/>
</dbReference>
<dbReference type="SUPFAM" id="SSF52540">
    <property type="entry name" value="P-loop containing nucleoside triphosphate hydrolases"/>
    <property type="match status" value="1"/>
</dbReference>
<dbReference type="SUPFAM" id="SSF50447">
    <property type="entry name" value="Translation proteins"/>
    <property type="match status" value="1"/>
</dbReference>
<dbReference type="PROSITE" id="PS00301">
    <property type="entry name" value="G_TR_1"/>
    <property type="match status" value="1"/>
</dbReference>
<dbReference type="PROSITE" id="PS51722">
    <property type="entry name" value="G_TR_2"/>
    <property type="match status" value="1"/>
</dbReference>
<comment type="function">
    <text evidence="2">GTP hydrolase that promotes the GTP-dependent binding of aminoacyl-tRNA to the A-site of ribosomes during protein biosynthesis.</text>
</comment>
<comment type="catalytic activity">
    <reaction evidence="2">
        <text>GTP + H2O = GDP + phosphate + H(+)</text>
        <dbReference type="Rhea" id="RHEA:19669"/>
        <dbReference type="ChEBI" id="CHEBI:15377"/>
        <dbReference type="ChEBI" id="CHEBI:15378"/>
        <dbReference type="ChEBI" id="CHEBI:37565"/>
        <dbReference type="ChEBI" id="CHEBI:43474"/>
        <dbReference type="ChEBI" id="CHEBI:58189"/>
        <dbReference type="EC" id="3.6.5.3"/>
    </reaction>
    <physiologicalReaction direction="left-to-right" evidence="2">
        <dbReference type="Rhea" id="RHEA:19670"/>
    </physiologicalReaction>
</comment>
<comment type="subunit">
    <text evidence="2">Monomer.</text>
</comment>
<comment type="subcellular location">
    <subcellularLocation>
        <location evidence="2">Cytoplasm</location>
    </subcellularLocation>
</comment>
<comment type="similarity">
    <text evidence="2">Belongs to the TRAFAC class translation factor GTPase superfamily. Classic translation factor GTPase family. EF-Tu/EF-1A subfamily.</text>
</comment>